<dbReference type="EMBL" id="DS995902">
    <property type="protein sequence ID" value="EEA22622.1"/>
    <property type="molecule type" value="Genomic_DNA"/>
</dbReference>
<dbReference type="RefSeq" id="XP_002148789.1">
    <property type="nucleotide sequence ID" value="XM_002148753.1"/>
</dbReference>
<dbReference type="SMR" id="B6QGW6"/>
<dbReference type="STRING" id="441960.B6QGW6"/>
<dbReference type="VEuPathDB" id="FungiDB:PMAA_092460"/>
<dbReference type="HOGENOM" id="CLU_047598_3_0_1"/>
<dbReference type="OrthoDB" id="13341at28568"/>
<dbReference type="PhylomeDB" id="B6QGW6"/>
<dbReference type="Proteomes" id="UP000001294">
    <property type="component" value="Unassembled WGS sequence"/>
</dbReference>
<dbReference type="GO" id="GO:0005739">
    <property type="term" value="C:mitochondrion"/>
    <property type="evidence" value="ECO:0007669"/>
    <property type="project" value="UniProtKB-SubCell"/>
</dbReference>
<dbReference type="GO" id="GO:0005634">
    <property type="term" value="C:nucleus"/>
    <property type="evidence" value="ECO:0007669"/>
    <property type="project" value="TreeGrafter"/>
</dbReference>
<dbReference type="InterPro" id="IPR010487">
    <property type="entry name" value="NGRN/Rrg9"/>
</dbReference>
<dbReference type="PANTHER" id="PTHR13475">
    <property type="entry name" value="NEUGRIN"/>
    <property type="match status" value="1"/>
</dbReference>
<dbReference type="PANTHER" id="PTHR13475:SF3">
    <property type="entry name" value="NEUGRIN"/>
    <property type="match status" value="1"/>
</dbReference>
<dbReference type="Pfam" id="PF06413">
    <property type="entry name" value="Neugrin"/>
    <property type="match status" value="1"/>
</dbReference>
<keyword id="KW-0496">Mitochondrion</keyword>
<keyword id="KW-1185">Reference proteome</keyword>
<keyword id="KW-0809">Transit peptide</keyword>
<accession>B6QGW6</accession>
<proteinExistence type="inferred from homology"/>
<organism>
    <name type="scientific">Talaromyces marneffei (strain ATCC 18224 / CBS 334.59 / QM 7333)</name>
    <name type="common">Penicillium marneffei</name>
    <dbReference type="NCBI Taxonomy" id="441960"/>
    <lineage>
        <taxon>Eukaryota</taxon>
        <taxon>Fungi</taxon>
        <taxon>Dikarya</taxon>
        <taxon>Ascomycota</taxon>
        <taxon>Pezizomycotina</taxon>
        <taxon>Eurotiomycetes</taxon>
        <taxon>Eurotiomycetidae</taxon>
        <taxon>Eurotiales</taxon>
        <taxon>Trichocomaceae</taxon>
        <taxon>Talaromyces</taxon>
        <taxon>Talaromyces sect. Talaromyces</taxon>
    </lineage>
</organism>
<comment type="function">
    <text evidence="1">Required for respiratory activity and maintenance and expression of the mitochondrial genome.</text>
</comment>
<comment type="subcellular location">
    <subcellularLocation>
        <location evidence="1">Mitochondrion</location>
    </subcellularLocation>
</comment>
<comment type="similarity">
    <text evidence="4">Belongs to the RRG9 family.</text>
</comment>
<feature type="transit peptide" description="Mitochondrion" evidence="2">
    <location>
        <begin position="1"/>
        <end position="67"/>
    </location>
</feature>
<feature type="chain" id="PRO_0000407956" description="Required for respiratory growth protein 9, mitochondrial">
    <location>
        <begin position="68"/>
        <end position="300"/>
    </location>
</feature>
<feature type="region of interest" description="Disordered" evidence="3">
    <location>
        <begin position="91"/>
        <end position="132"/>
    </location>
</feature>
<feature type="region of interest" description="Disordered" evidence="3">
    <location>
        <begin position="259"/>
        <end position="300"/>
    </location>
</feature>
<feature type="compositionally biased region" description="Basic residues" evidence="3">
    <location>
        <begin position="115"/>
        <end position="127"/>
    </location>
</feature>
<name>RRG9_TALMQ</name>
<gene>
    <name type="primary">rrg9</name>
    <name type="ORF">PMAA_092460</name>
</gene>
<protein>
    <recommendedName>
        <fullName>Required for respiratory growth protein 9, mitochondrial</fullName>
    </recommendedName>
</protein>
<reference key="1">
    <citation type="journal article" date="2015" name="Genome Announc.">
        <title>Genome sequence of the AIDS-associated pathogen Penicillium marneffei (ATCC18224) and its near taxonomic relative Talaromyces stipitatus (ATCC10500).</title>
        <authorList>
            <person name="Nierman W.C."/>
            <person name="Fedorova-Abrams N.D."/>
            <person name="Andrianopoulos A."/>
        </authorList>
    </citation>
    <scope>NUCLEOTIDE SEQUENCE [LARGE SCALE GENOMIC DNA]</scope>
    <source>
        <strain>ATCC 18224 / CBS 334.59 / QM 7333</strain>
    </source>
</reference>
<sequence length="300" mass="34311">MAVCAASRRLTLSNVLQGVYRTELVRQHAENSAINFYAQRLTRPALTAANSNPWLSKRSFSTSQAFKDGGNIVIYDVIATKAPDGDVLTELTSTKAEDSPKTPKSPKSSSEKPKSSKTKTKAAKKSGTKYLASELVNPEKKVKRPHWQTQKEALEKKFTEGWHPRKKLPPDSLDTIRHLHATKPDVWTTPVLADQFKISPEAIRRILKSKWQPTEEERERREERWAERYKKIYSHMEELGLRRRKGEWTAKVSDARRLGLEGKSIRQNFRRKPQARPEGTEINISRPDREASPKESTSLE</sequence>
<evidence type="ECO:0000250" key="1"/>
<evidence type="ECO:0000255" key="2"/>
<evidence type="ECO:0000256" key="3">
    <source>
        <dbReference type="SAM" id="MobiDB-lite"/>
    </source>
</evidence>
<evidence type="ECO:0000305" key="4"/>